<gene>
    <name evidence="1" type="primary">pepA</name>
    <name type="ordered locus">Erum6380</name>
    <name type="ordered locus">ERWE_CDS_06690</name>
</gene>
<evidence type="ECO:0000255" key="1">
    <source>
        <dbReference type="HAMAP-Rule" id="MF_00181"/>
    </source>
</evidence>
<reference key="1">
    <citation type="journal article" date="2005" name="Proc. Natl. Acad. Sci. U.S.A.">
        <title>The genome of the heartwater agent Ehrlichia ruminantium contains multiple tandem repeats of actively variable copy number.</title>
        <authorList>
            <person name="Collins N.E."/>
            <person name="Liebenberg J."/>
            <person name="de Villiers E.P."/>
            <person name="Brayton K.A."/>
            <person name="Louw E."/>
            <person name="Pretorius A."/>
            <person name="Faber F.E."/>
            <person name="van Heerden H."/>
            <person name="Josemans A."/>
            <person name="van Kleef M."/>
            <person name="Steyn H.C."/>
            <person name="van Strijp M.F."/>
            <person name="Zweygarth E."/>
            <person name="Jongejan F."/>
            <person name="Maillard J.C."/>
            <person name="Berthier D."/>
            <person name="Botha M."/>
            <person name="Joubert F."/>
            <person name="Corton C.H."/>
            <person name="Thomson N.R."/>
            <person name="Allsopp M.T."/>
            <person name="Allsopp B.A."/>
        </authorList>
    </citation>
    <scope>NUCLEOTIDE SEQUENCE [LARGE SCALE GENOMIC DNA]</scope>
    <source>
        <strain>Welgevonden</strain>
    </source>
</reference>
<reference key="2">
    <citation type="journal article" date="2006" name="J. Bacteriol.">
        <title>Comparative genomic analysis of three strains of Ehrlichia ruminantium reveals an active process of genome size plasticity.</title>
        <authorList>
            <person name="Frutos R."/>
            <person name="Viari A."/>
            <person name="Ferraz C."/>
            <person name="Morgat A."/>
            <person name="Eychenie S."/>
            <person name="Kandassamy Y."/>
            <person name="Chantal I."/>
            <person name="Bensaid A."/>
            <person name="Coissac E."/>
            <person name="Vachiery N."/>
            <person name="Demaille J."/>
            <person name="Martinez D."/>
        </authorList>
    </citation>
    <scope>NUCLEOTIDE SEQUENCE [LARGE SCALE GENOMIC DNA]</scope>
    <source>
        <strain>Welgevonden</strain>
    </source>
</reference>
<accession>Q5HAP2</accession>
<accession>Q5FDB2</accession>
<feature type="chain" id="PRO_1000019918" description="Probable cytosol aminopeptidase">
    <location>
        <begin position="1"/>
        <end position="500"/>
    </location>
</feature>
<feature type="active site" evidence="1">
    <location>
        <position position="274"/>
    </location>
</feature>
<feature type="active site" evidence="1">
    <location>
        <position position="348"/>
    </location>
</feature>
<feature type="binding site" evidence="1">
    <location>
        <position position="262"/>
    </location>
    <ligand>
        <name>Mn(2+)</name>
        <dbReference type="ChEBI" id="CHEBI:29035"/>
        <label>2</label>
    </ligand>
</feature>
<feature type="binding site" evidence="1">
    <location>
        <position position="267"/>
    </location>
    <ligand>
        <name>Mn(2+)</name>
        <dbReference type="ChEBI" id="CHEBI:29035"/>
        <label>1</label>
    </ligand>
</feature>
<feature type="binding site" evidence="1">
    <location>
        <position position="267"/>
    </location>
    <ligand>
        <name>Mn(2+)</name>
        <dbReference type="ChEBI" id="CHEBI:29035"/>
        <label>2</label>
    </ligand>
</feature>
<feature type="binding site" evidence="1">
    <location>
        <position position="285"/>
    </location>
    <ligand>
        <name>Mn(2+)</name>
        <dbReference type="ChEBI" id="CHEBI:29035"/>
        <label>2</label>
    </ligand>
</feature>
<feature type="binding site" evidence="1">
    <location>
        <position position="344"/>
    </location>
    <ligand>
        <name>Mn(2+)</name>
        <dbReference type="ChEBI" id="CHEBI:29035"/>
        <label>1</label>
    </ligand>
</feature>
<feature type="binding site" evidence="1">
    <location>
        <position position="346"/>
    </location>
    <ligand>
        <name>Mn(2+)</name>
        <dbReference type="ChEBI" id="CHEBI:29035"/>
        <label>1</label>
    </ligand>
</feature>
<feature type="binding site" evidence="1">
    <location>
        <position position="346"/>
    </location>
    <ligand>
        <name>Mn(2+)</name>
        <dbReference type="ChEBI" id="CHEBI:29035"/>
        <label>2</label>
    </ligand>
</feature>
<keyword id="KW-0031">Aminopeptidase</keyword>
<keyword id="KW-0963">Cytoplasm</keyword>
<keyword id="KW-0378">Hydrolase</keyword>
<keyword id="KW-0464">Manganese</keyword>
<keyword id="KW-0479">Metal-binding</keyword>
<keyword id="KW-0645">Protease</keyword>
<dbReference type="EC" id="3.4.11.1" evidence="1"/>
<dbReference type="EC" id="3.4.11.10" evidence="1"/>
<dbReference type="EMBL" id="CR767821">
    <property type="protein sequence ID" value="CAH58370.1"/>
    <property type="molecule type" value="Genomic_DNA"/>
</dbReference>
<dbReference type="EMBL" id="CR925678">
    <property type="protein sequence ID" value="CAI27163.1"/>
    <property type="molecule type" value="Genomic_DNA"/>
</dbReference>
<dbReference type="RefSeq" id="WP_011155318.1">
    <property type="nucleotide sequence ID" value="NC_005295.2"/>
</dbReference>
<dbReference type="SMR" id="Q5HAP2"/>
<dbReference type="GeneID" id="33058134"/>
<dbReference type="KEGG" id="eru:Erum6380"/>
<dbReference type="KEGG" id="erw:ERWE_CDS_06690"/>
<dbReference type="eggNOG" id="COG0260">
    <property type="taxonomic scope" value="Bacteria"/>
</dbReference>
<dbReference type="HOGENOM" id="CLU_013734_6_0_5"/>
<dbReference type="Proteomes" id="UP000001021">
    <property type="component" value="Chromosome"/>
</dbReference>
<dbReference type="GO" id="GO:0005737">
    <property type="term" value="C:cytoplasm"/>
    <property type="evidence" value="ECO:0007669"/>
    <property type="project" value="UniProtKB-SubCell"/>
</dbReference>
<dbReference type="GO" id="GO:0030145">
    <property type="term" value="F:manganese ion binding"/>
    <property type="evidence" value="ECO:0007669"/>
    <property type="project" value="UniProtKB-UniRule"/>
</dbReference>
<dbReference type="GO" id="GO:0070006">
    <property type="term" value="F:metalloaminopeptidase activity"/>
    <property type="evidence" value="ECO:0007669"/>
    <property type="project" value="InterPro"/>
</dbReference>
<dbReference type="GO" id="GO:0006508">
    <property type="term" value="P:proteolysis"/>
    <property type="evidence" value="ECO:0007669"/>
    <property type="project" value="UniProtKB-KW"/>
</dbReference>
<dbReference type="CDD" id="cd00433">
    <property type="entry name" value="Peptidase_M17"/>
    <property type="match status" value="1"/>
</dbReference>
<dbReference type="FunFam" id="3.40.630.10:FF:000004">
    <property type="entry name" value="Probable cytosol aminopeptidase"/>
    <property type="match status" value="1"/>
</dbReference>
<dbReference type="Gene3D" id="3.40.220.10">
    <property type="entry name" value="Leucine Aminopeptidase, subunit E, domain 1"/>
    <property type="match status" value="1"/>
</dbReference>
<dbReference type="Gene3D" id="3.40.630.10">
    <property type="entry name" value="Zn peptidases"/>
    <property type="match status" value="1"/>
</dbReference>
<dbReference type="HAMAP" id="MF_00181">
    <property type="entry name" value="Cytosol_peptidase_M17"/>
    <property type="match status" value="1"/>
</dbReference>
<dbReference type="InterPro" id="IPR011356">
    <property type="entry name" value="Leucine_aapep/pepB"/>
</dbReference>
<dbReference type="InterPro" id="IPR043472">
    <property type="entry name" value="Macro_dom-like"/>
</dbReference>
<dbReference type="InterPro" id="IPR000819">
    <property type="entry name" value="Peptidase_M17_C"/>
</dbReference>
<dbReference type="InterPro" id="IPR023042">
    <property type="entry name" value="Peptidase_M17_leu_NH2_pept"/>
</dbReference>
<dbReference type="InterPro" id="IPR008283">
    <property type="entry name" value="Peptidase_M17_N"/>
</dbReference>
<dbReference type="NCBIfam" id="NF002073">
    <property type="entry name" value="PRK00913.1-2"/>
    <property type="match status" value="1"/>
</dbReference>
<dbReference type="NCBIfam" id="NF002074">
    <property type="entry name" value="PRK00913.1-4"/>
    <property type="match status" value="1"/>
</dbReference>
<dbReference type="NCBIfam" id="NF002075">
    <property type="entry name" value="PRK00913.2-2"/>
    <property type="match status" value="1"/>
</dbReference>
<dbReference type="NCBIfam" id="NF002077">
    <property type="entry name" value="PRK00913.2-4"/>
    <property type="match status" value="1"/>
</dbReference>
<dbReference type="PANTHER" id="PTHR11963:SF23">
    <property type="entry name" value="CYTOSOL AMINOPEPTIDASE"/>
    <property type="match status" value="1"/>
</dbReference>
<dbReference type="PANTHER" id="PTHR11963">
    <property type="entry name" value="LEUCINE AMINOPEPTIDASE-RELATED"/>
    <property type="match status" value="1"/>
</dbReference>
<dbReference type="Pfam" id="PF00883">
    <property type="entry name" value="Peptidase_M17"/>
    <property type="match status" value="1"/>
</dbReference>
<dbReference type="Pfam" id="PF02789">
    <property type="entry name" value="Peptidase_M17_N"/>
    <property type="match status" value="1"/>
</dbReference>
<dbReference type="PRINTS" id="PR00481">
    <property type="entry name" value="LAMNOPPTDASE"/>
</dbReference>
<dbReference type="SUPFAM" id="SSF52949">
    <property type="entry name" value="Macro domain-like"/>
    <property type="match status" value="1"/>
</dbReference>
<dbReference type="SUPFAM" id="SSF53187">
    <property type="entry name" value="Zn-dependent exopeptidases"/>
    <property type="match status" value="1"/>
</dbReference>
<dbReference type="PROSITE" id="PS00631">
    <property type="entry name" value="CYTOSOL_AP"/>
    <property type="match status" value="1"/>
</dbReference>
<name>AMPA_EHRRW</name>
<organism>
    <name type="scientific">Ehrlichia ruminantium (strain Welgevonden)</name>
    <dbReference type="NCBI Taxonomy" id="254945"/>
    <lineage>
        <taxon>Bacteria</taxon>
        <taxon>Pseudomonadati</taxon>
        <taxon>Pseudomonadota</taxon>
        <taxon>Alphaproteobacteria</taxon>
        <taxon>Rickettsiales</taxon>
        <taxon>Anaplasmataceae</taxon>
        <taxon>Ehrlichia</taxon>
    </lineage>
</organism>
<comment type="function">
    <text evidence="1">Presumably involved in the processing and regular turnover of intracellular proteins. Catalyzes the removal of unsubstituted N-terminal amino acids from various peptides.</text>
</comment>
<comment type="catalytic activity">
    <reaction evidence="1">
        <text>Release of an N-terminal amino acid, Xaa-|-Yaa-, in which Xaa is preferably Leu, but may be other amino acids including Pro although not Arg or Lys, and Yaa may be Pro. Amino acid amides and methyl esters are also readily hydrolyzed, but rates on arylamides are exceedingly low.</text>
        <dbReference type="EC" id="3.4.11.1"/>
    </reaction>
</comment>
<comment type="catalytic activity">
    <reaction evidence="1">
        <text>Release of an N-terminal amino acid, preferentially leucine, but not glutamic or aspartic acids.</text>
        <dbReference type="EC" id="3.4.11.10"/>
    </reaction>
</comment>
<comment type="cofactor">
    <cofactor evidence="1">
        <name>Mn(2+)</name>
        <dbReference type="ChEBI" id="CHEBI:29035"/>
    </cofactor>
    <text evidence="1">Binds 2 manganese ions per subunit.</text>
</comment>
<comment type="subcellular location">
    <subcellularLocation>
        <location evidence="1">Cytoplasm</location>
    </subcellularLocation>
</comment>
<comment type="similarity">
    <text evidence="1">Belongs to the peptidase M17 family.</text>
</comment>
<protein>
    <recommendedName>
        <fullName evidence="1">Probable cytosol aminopeptidase</fullName>
        <ecNumber evidence="1">3.4.11.1</ecNumber>
    </recommendedName>
    <alternativeName>
        <fullName evidence="1">Leucine aminopeptidase</fullName>
        <shortName evidence="1">LAP</shortName>
        <ecNumber evidence="1">3.4.11.10</ecNumber>
    </alternativeName>
    <alternativeName>
        <fullName evidence="1">Leucyl aminopeptidase</fullName>
    </alternativeName>
</protein>
<sequence length="500" mass="54436">MINVSFLGLMSGISVLLKTTVIVVGIFEGSNHLEDNGALEGYNDKIMEIVNGYQSFDGKFAEVLPIIGLEKDFPVVVVIGLGKSEDFDENKALKVGGVIYSELNRMKIPDASIVINTDSNVSANIGYGALLRSFKFDKYFVEKKDKNSVYLNKLVLFSKSEPQEVTALFNDLKAEGESIFLARSFVSEPPNILYPETYAQMIYEELSKVGVTVEVFDEDYMKANQMMALLGVGQGSAKKSRLVVMKWNGGDESESPIAFVGKGVTFDTGGISLKPSKGMWDMKYDMAGSASVVGIMRTLAARKAKVNAVGVVGLVENSVDGNAQRPSDVVISMSGQTIEVLNTDAEGRLVLADALWYTQEMFTPKLMVDLATLTGAVVVALGNNQYAGLFSNDDAIANQLIVAGNESGEKLWRLPLDEAYDKLIDSSIADMQNISTKGYGADSITAAQFLQRFVNGVPWVHLDIAGMAWDYEGTEICPKGATGFGVRLLNRFVSKYYESH</sequence>
<proteinExistence type="inferred from homology"/>